<organism>
    <name type="scientific">Mus musculus</name>
    <name type="common">Mouse</name>
    <dbReference type="NCBI Taxonomy" id="10090"/>
    <lineage>
        <taxon>Eukaryota</taxon>
        <taxon>Metazoa</taxon>
        <taxon>Chordata</taxon>
        <taxon>Craniata</taxon>
        <taxon>Vertebrata</taxon>
        <taxon>Euteleostomi</taxon>
        <taxon>Mammalia</taxon>
        <taxon>Eutheria</taxon>
        <taxon>Euarchontoglires</taxon>
        <taxon>Glires</taxon>
        <taxon>Rodentia</taxon>
        <taxon>Myomorpha</taxon>
        <taxon>Muroidea</taxon>
        <taxon>Muridae</taxon>
        <taxon>Murinae</taxon>
        <taxon>Mus</taxon>
        <taxon>Mus</taxon>
    </lineage>
</organism>
<feature type="chain" id="PRO_0000158927" description="Adenylate kinase 4, mitochondrial">
    <location>
        <begin position="1"/>
        <end position="223"/>
    </location>
</feature>
<feature type="region of interest" description="NMP" evidence="2">
    <location>
        <begin position="35"/>
        <end position="64"/>
    </location>
</feature>
<feature type="region of interest" description="LID" evidence="2">
    <location>
        <begin position="125"/>
        <end position="162"/>
    </location>
</feature>
<feature type="binding site" evidence="2">
    <location>
        <begin position="15"/>
        <end position="20"/>
    </location>
    <ligand>
        <name>a ribonucleoside 5'-triphosphate</name>
        <dbReference type="ChEBI" id="CHEBI:61557"/>
    </ligand>
</feature>
<feature type="binding site" evidence="2">
    <location>
        <position position="36"/>
    </location>
    <ligand>
        <name>AMP</name>
        <dbReference type="ChEBI" id="CHEBI:456215"/>
    </ligand>
</feature>
<feature type="binding site" evidence="2">
    <location>
        <position position="41"/>
    </location>
    <ligand>
        <name>AMP</name>
        <dbReference type="ChEBI" id="CHEBI:456215"/>
    </ligand>
</feature>
<feature type="binding site" evidence="2">
    <location>
        <begin position="62"/>
        <end position="64"/>
    </location>
    <ligand>
        <name>AMP</name>
        <dbReference type="ChEBI" id="CHEBI:456215"/>
    </ligand>
</feature>
<feature type="binding site" evidence="2">
    <location>
        <begin position="89"/>
        <end position="92"/>
    </location>
    <ligand>
        <name>AMP</name>
        <dbReference type="ChEBI" id="CHEBI:456215"/>
    </ligand>
</feature>
<feature type="binding site" evidence="2">
    <location>
        <position position="96"/>
    </location>
    <ligand>
        <name>AMP</name>
        <dbReference type="ChEBI" id="CHEBI:456215"/>
    </ligand>
</feature>
<feature type="binding site" evidence="2">
    <location>
        <position position="126"/>
    </location>
    <ligand>
        <name>a ribonucleoside 5'-triphosphate</name>
        <dbReference type="ChEBI" id="CHEBI:61557"/>
    </ligand>
</feature>
<feature type="binding site" evidence="2">
    <location>
        <begin position="135"/>
        <end position="136"/>
    </location>
    <ligand>
        <name>a ribonucleoside 5'-triphosphate</name>
        <dbReference type="ChEBI" id="CHEBI:61557"/>
    </ligand>
</feature>
<feature type="binding site" evidence="2">
    <location>
        <position position="170"/>
    </location>
    <ligand>
        <name>AMP</name>
        <dbReference type="ChEBI" id="CHEBI:456215"/>
    </ligand>
</feature>
<feature type="binding site" evidence="2">
    <location>
        <position position="199"/>
    </location>
    <ligand>
        <name>a ribonucleoside 5'-triphosphate</name>
        <dbReference type="ChEBI" id="CHEBI:61557"/>
    </ligand>
</feature>
<feature type="modified residue" description="N6-succinyllysine" evidence="9">
    <location>
        <position position="60"/>
    </location>
</feature>
<feature type="modified residue" description="N6-acetyllysine" evidence="8">
    <location>
        <position position="175"/>
    </location>
</feature>
<feature type="modified residue" description="N6-acetyllysine; alternate" evidence="8">
    <location>
        <position position="179"/>
    </location>
</feature>
<feature type="modified residue" description="N6-succinyllysine; alternate" evidence="9">
    <location>
        <position position="179"/>
    </location>
</feature>
<feature type="modified residue" description="N6-acetyllysine; alternate" evidence="8">
    <location>
        <position position="186"/>
    </location>
</feature>
<feature type="modified residue" description="N6-succinyllysine; alternate" evidence="9">
    <location>
        <position position="186"/>
    </location>
</feature>
<feature type="sequence conflict" description="In Ref. 2; BAA77363." evidence="6" ref="2">
    <original>V</original>
    <variation>A</variation>
    <location>
        <position position="68"/>
    </location>
</feature>
<feature type="sequence conflict" description="In Ref. 2; BAA77363." evidence="6" ref="2">
    <original>S</original>
    <variation>N</variation>
    <location>
        <position position="187"/>
    </location>
</feature>
<feature type="sequence conflict" description="In Ref. 2; BAA77363." evidence="6" ref="2">
    <original>V</original>
    <variation>M</variation>
    <location>
        <position position="190"/>
    </location>
</feature>
<accession>Q9WUR9</accession>
<accession>Q9R1X7</accession>
<reference key="1">
    <citation type="journal article" date="1998" name="Brain Res. Mol. Brain Res.">
        <title>Identification of a novel adenylate kinase system in the brain: cloning of the fourth adenylate kinase.</title>
        <authorList>
            <person name="Yoneda T."/>
            <person name="Sato M."/>
            <person name="Maeda M."/>
            <person name="Takagi H."/>
        </authorList>
    </citation>
    <scope>NUCLEOTIDE SEQUENCE [MRNA]</scope>
    <scope>TISSUE SPECIFICITY</scope>
    <scope>DEVELOPMENTAL STAGE</scope>
    <source>
        <tissue>Brain</tissue>
    </source>
</reference>
<reference key="2">
    <citation type="submission" date="1998-11" db="EMBL/GenBank/DDBJ databases">
        <authorList>
            <person name="Noma T."/>
        </authorList>
    </citation>
    <scope>NUCLEOTIDE SEQUENCE [MRNA]</scope>
</reference>
<reference key="3">
    <citation type="journal article" date="2004" name="Genome Res.">
        <title>The status, quality, and expansion of the NIH full-length cDNA project: the Mammalian Gene Collection (MGC).</title>
        <authorList>
            <consortium name="The MGC Project Team"/>
        </authorList>
    </citation>
    <scope>NUCLEOTIDE SEQUENCE [LARGE SCALE MRNA]</scope>
    <source>
        <strain>C57BL/6J</strain>
        <tissue>Eye</tissue>
    </source>
</reference>
<reference key="4">
    <citation type="journal article" date="2009" name="Acta Histochem. Cytochem.">
        <title>Localization of adenylate kinase 4 in mouse tissues.</title>
        <authorList>
            <person name="Miyoshi K."/>
            <person name="Akazawa Y."/>
            <person name="Horiguchi T."/>
            <person name="Noma T."/>
        </authorList>
    </citation>
    <scope>TISSUE SPECIFICITY</scope>
</reference>
<reference key="5">
    <citation type="journal article" date="2009" name="Int. J. Biochem. Cell Biol.">
        <title>Enzymatically inactive adenylate kinase 4 interacts with mitochondrial ADP/ATP translocase.</title>
        <authorList>
            <person name="Liu R."/>
            <person name="Stroem A.L."/>
            <person name="Zhai J."/>
            <person name="Gal J."/>
            <person name="Bao S."/>
            <person name="Gong W."/>
            <person name="Zhu H."/>
        </authorList>
    </citation>
    <scope>TISSUE SPECIFICITY</scope>
</reference>
<reference key="6">
    <citation type="journal article" date="2010" name="Cell">
        <title>A tissue-specific atlas of mouse protein phosphorylation and expression.</title>
        <authorList>
            <person name="Huttlin E.L."/>
            <person name="Jedrychowski M.P."/>
            <person name="Elias J.E."/>
            <person name="Goswami T."/>
            <person name="Rad R."/>
            <person name="Beausoleil S.A."/>
            <person name="Villen J."/>
            <person name="Haas W."/>
            <person name="Sowa M.E."/>
            <person name="Gygi S.P."/>
        </authorList>
    </citation>
    <scope>IDENTIFICATION BY MASS SPECTROMETRY [LARGE SCALE ANALYSIS]</scope>
    <source>
        <tissue>Brain</tissue>
        <tissue>Heart</tissue>
        <tissue>Kidney</tissue>
        <tissue>Liver</tissue>
        <tissue>Testis</tissue>
    </source>
</reference>
<reference key="7">
    <citation type="journal article" date="2013" name="Mol. Cell">
        <title>SIRT5-mediated lysine desuccinylation impacts diverse metabolic pathways.</title>
        <authorList>
            <person name="Park J."/>
            <person name="Chen Y."/>
            <person name="Tishkoff D.X."/>
            <person name="Peng C."/>
            <person name="Tan M."/>
            <person name="Dai L."/>
            <person name="Xie Z."/>
            <person name="Zhang Y."/>
            <person name="Zwaans B.M."/>
            <person name="Skinner M.E."/>
            <person name="Lombard D.B."/>
            <person name="Zhao Y."/>
        </authorList>
    </citation>
    <scope>SUCCINYLATION [LARGE SCALE ANALYSIS] AT LYS-60; LYS-179 AND LYS-186</scope>
    <scope>IDENTIFICATION BY MASS SPECTROMETRY [LARGE SCALE ANALYSIS]</scope>
    <source>
        <tissue>Embryonic fibroblast</tissue>
        <tissue>Liver</tissue>
    </source>
</reference>
<reference key="8">
    <citation type="journal article" date="2013" name="Proc. Natl. Acad. Sci. U.S.A.">
        <title>Label-free quantitative proteomics of the lysine acetylome in mitochondria identifies substrates of SIRT3 in metabolic pathways.</title>
        <authorList>
            <person name="Rardin M.J."/>
            <person name="Newman J.C."/>
            <person name="Held J.M."/>
            <person name="Cusack M.P."/>
            <person name="Sorensen D.J."/>
            <person name="Li B."/>
            <person name="Schilling B."/>
            <person name="Mooney S.D."/>
            <person name="Kahn C.R."/>
            <person name="Verdin E."/>
            <person name="Gibson B.W."/>
        </authorList>
    </citation>
    <scope>ACETYLATION [LARGE SCALE ANALYSIS] AT LYS-175; LYS-179 AND LYS-186</scope>
    <scope>IDENTIFICATION BY MASS SPECTROMETRY [LARGE SCALE ANALYSIS]</scope>
    <source>
        <tissue>Liver</tissue>
    </source>
</reference>
<proteinExistence type="evidence at protein level"/>
<gene>
    <name evidence="7" type="primary">Ak4</name>
    <name type="synonym">Ak-4</name>
    <name type="synonym">Ak3b</name>
    <name type="synonym">Ak3l1</name>
</gene>
<dbReference type="EC" id="2.7.4.4" evidence="1"/>
<dbReference type="EC" id="2.7.4.6" evidence="1"/>
<dbReference type="EMBL" id="D85036">
    <property type="protein sequence ID" value="BAA77760.1"/>
    <property type="molecule type" value="mRNA"/>
</dbReference>
<dbReference type="EMBL" id="AB020239">
    <property type="protein sequence ID" value="BAA77363.1"/>
    <property type="molecule type" value="mRNA"/>
</dbReference>
<dbReference type="EMBL" id="BC086663">
    <property type="protein sequence ID" value="AAH86663.1"/>
    <property type="molecule type" value="mRNA"/>
</dbReference>
<dbReference type="CCDS" id="CCDS18394.1"/>
<dbReference type="RefSeq" id="NP_001171073.1">
    <property type="nucleotide sequence ID" value="NM_001177602.2"/>
</dbReference>
<dbReference type="RefSeq" id="NP_001171075.1">
    <property type="nucleotide sequence ID" value="NM_001177604.2"/>
</dbReference>
<dbReference type="RefSeq" id="NP_001171076.1">
    <property type="nucleotide sequence ID" value="NM_001177605.2"/>
</dbReference>
<dbReference type="RefSeq" id="NP_033777.1">
    <property type="nucleotide sequence ID" value="NM_009647.6"/>
</dbReference>
<dbReference type="SMR" id="Q9WUR9"/>
<dbReference type="BioGRID" id="198047">
    <property type="interactions" value="3"/>
</dbReference>
<dbReference type="FunCoup" id="Q9WUR9">
    <property type="interactions" value="1542"/>
</dbReference>
<dbReference type="STRING" id="10090.ENSMUSP00000102559"/>
<dbReference type="GlyGen" id="Q9WUR9">
    <property type="glycosylation" value="1 site, 1 O-linked glycan (1 site)"/>
</dbReference>
<dbReference type="iPTMnet" id="Q9WUR9"/>
<dbReference type="PhosphoSitePlus" id="Q9WUR9"/>
<dbReference type="SwissPalm" id="Q9WUR9"/>
<dbReference type="REPRODUCTION-2DPAGE" id="Q9WUR9"/>
<dbReference type="jPOST" id="Q9WUR9"/>
<dbReference type="PaxDb" id="10090-ENSMUSP00000102559"/>
<dbReference type="ProteomicsDB" id="269171"/>
<dbReference type="Pumba" id="Q9WUR9"/>
<dbReference type="Antibodypedia" id="19540">
    <property type="antibodies" value="476 antibodies from 32 providers"/>
</dbReference>
<dbReference type="DNASU" id="11639"/>
<dbReference type="Ensembl" id="ENSMUST00000102780.8">
    <property type="protein sequence ID" value="ENSMUSP00000099841.2"/>
    <property type="gene ID" value="ENSMUSG00000028527.19"/>
</dbReference>
<dbReference type="Ensembl" id="ENSMUST00000106945.8">
    <property type="protein sequence ID" value="ENSMUSP00000102558.2"/>
    <property type="gene ID" value="ENSMUSG00000028527.19"/>
</dbReference>
<dbReference type="Ensembl" id="ENSMUST00000106946.8">
    <property type="protein sequence ID" value="ENSMUSP00000102559.2"/>
    <property type="gene ID" value="ENSMUSG00000028527.19"/>
</dbReference>
<dbReference type="GeneID" id="11639"/>
<dbReference type="KEGG" id="mmu:11639"/>
<dbReference type="UCSC" id="uc008tvn.2">
    <property type="organism name" value="mouse"/>
</dbReference>
<dbReference type="AGR" id="MGI:87979"/>
<dbReference type="CTD" id="205"/>
<dbReference type="MGI" id="MGI:87979">
    <property type="gene designation" value="Ak4"/>
</dbReference>
<dbReference type="VEuPathDB" id="HostDB:ENSMUSG00000028527"/>
<dbReference type="eggNOG" id="KOG3078">
    <property type="taxonomic scope" value="Eukaryota"/>
</dbReference>
<dbReference type="GeneTree" id="ENSGT00940000154568"/>
<dbReference type="InParanoid" id="Q9WUR9"/>
<dbReference type="OMA" id="IKVENTM"/>
<dbReference type="OrthoDB" id="439792at2759"/>
<dbReference type="PhylomeDB" id="Q9WUR9"/>
<dbReference type="TreeFam" id="TF312916"/>
<dbReference type="Reactome" id="R-MMU-499943">
    <property type="pathway name" value="Interconversion of nucleotide di- and triphosphates"/>
</dbReference>
<dbReference type="BioGRID-ORCS" id="11639">
    <property type="hits" value="0 hits in 76 CRISPR screens"/>
</dbReference>
<dbReference type="ChiTaRS" id="Ak4">
    <property type="organism name" value="mouse"/>
</dbReference>
<dbReference type="PRO" id="PR:Q9WUR9"/>
<dbReference type="Proteomes" id="UP000000589">
    <property type="component" value="Chromosome 4"/>
</dbReference>
<dbReference type="RNAct" id="Q9WUR9">
    <property type="molecule type" value="protein"/>
</dbReference>
<dbReference type="Bgee" id="ENSMUSG00000028527">
    <property type="expression patterns" value="Expressed in cumulus cell and 270 other cell types or tissues"/>
</dbReference>
<dbReference type="ExpressionAtlas" id="Q9WUR9">
    <property type="expression patterns" value="baseline and differential"/>
</dbReference>
<dbReference type="GO" id="GO:0005759">
    <property type="term" value="C:mitochondrial matrix"/>
    <property type="evidence" value="ECO:0000314"/>
    <property type="project" value="BHF-UCL"/>
</dbReference>
<dbReference type="GO" id="GO:0005739">
    <property type="term" value="C:mitochondrion"/>
    <property type="evidence" value="ECO:0007005"/>
    <property type="project" value="MGI"/>
</dbReference>
<dbReference type="GO" id="GO:0004017">
    <property type="term" value="F:adenylate kinase activity"/>
    <property type="evidence" value="ECO:0007669"/>
    <property type="project" value="InterPro"/>
</dbReference>
<dbReference type="GO" id="GO:0005524">
    <property type="term" value="F:ATP binding"/>
    <property type="evidence" value="ECO:0007669"/>
    <property type="project" value="UniProtKB-KW"/>
</dbReference>
<dbReference type="GO" id="GO:0036430">
    <property type="term" value="F:CMP kinase activity"/>
    <property type="evidence" value="ECO:0007669"/>
    <property type="project" value="RHEA"/>
</dbReference>
<dbReference type="GO" id="GO:0036431">
    <property type="term" value="F:dCMP kinase activity"/>
    <property type="evidence" value="ECO:0007669"/>
    <property type="project" value="RHEA"/>
</dbReference>
<dbReference type="GO" id="GO:0047506">
    <property type="term" value="F:deoxyadenylate kinase activity"/>
    <property type="evidence" value="ECO:0007669"/>
    <property type="project" value="RHEA"/>
</dbReference>
<dbReference type="GO" id="GO:0005525">
    <property type="term" value="F:GTP binding"/>
    <property type="evidence" value="ECO:0007669"/>
    <property type="project" value="UniProtKB-KW"/>
</dbReference>
<dbReference type="GO" id="GO:0004550">
    <property type="term" value="F:nucleoside diphosphate kinase activity"/>
    <property type="evidence" value="ECO:0000250"/>
    <property type="project" value="UniProtKB"/>
</dbReference>
<dbReference type="GO" id="GO:0046899">
    <property type="term" value="F:nucleoside triphosphate adenylate kinase activity"/>
    <property type="evidence" value="ECO:0007669"/>
    <property type="project" value="UniProtKB-UniRule"/>
</dbReference>
<dbReference type="GO" id="GO:0006172">
    <property type="term" value="P:ADP biosynthetic process"/>
    <property type="evidence" value="ECO:0007669"/>
    <property type="project" value="UniProtKB-UniRule"/>
</dbReference>
<dbReference type="GO" id="GO:0046033">
    <property type="term" value="P:AMP metabolic process"/>
    <property type="evidence" value="ECO:0007669"/>
    <property type="project" value="UniProtKB-UniRule"/>
</dbReference>
<dbReference type="GO" id="GO:0046034">
    <property type="term" value="P:ATP metabolic process"/>
    <property type="evidence" value="ECO:0007669"/>
    <property type="project" value="UniProtKB-UniRule"/>
</dbReference>
<dbReference type="GO" id="GO:0071456">
    <property type="term" value="P:cellular response to hypoxia"/>
    <property type="evidence" value="ECO:0000250"/>
    <property type="project" value="UniProtKB"/>
</dbReference>
<dbReference type="GO" id="GO:0046039">
    <property type="term" value="P:GTP metabolic process"/>
    <property type="evidence" value="ECO:0007669"/>
    <property type="project" value="UniProtKB-UniRule"/>
</dbReference>
<dbReference type="GO" id="GO:0002082">
    <property type="term" value="P:regulation of oxidative phosphorylation"/>
    <property type="evidence" value="ECO:0000250"/>
    <property type="project" value="UniProtKB"/>
</dbReference>
<dbReference type="GO" id="GO:0009188">
    <property type="term" value="P:ribonucleoside diphosphate biosynthetic process"/>
    <property type="evidence" value="ECO:0000250"/>
    <property type="project" value="UniProtKB"/>
</dbReference>
<dbReference type="CDD" id="cd01428">
    <property type="entry name" value="ADK"/>
    <property type="match status" value="1"/>
</dbReference>
<dbReference type="FunFam" id="3.40.50.300:FF:000106">
    <property type="entry name" value="Adenylate kinase mitochondrial"/>
    <property type="match status" value="1"/>
</dbReference>
<dbReference type="Gene3D" id="3.40.50.300">
    <property type="entry name" value="P-loop containing nucleotide triphosphate hydrolases"/>
    <property type="match status" value="1"/>
</dbReference>
<dbReference type="HAMAP" id="MF_00235">
    <property type="entry name" value="Adenylate_kinase_Adk"/>
    <property type="match status" value="1"/>
</dbReference>
<dbReference type="HAMAP" id="MF_03169">
    <property type="entry name" value="Adenylate_kinase_AK3"/>
    <property type="match status" value="1"/>
</dbReference>
<dbReference type="HAMAP" id="MF_03170">
    <property type="entry name" value="Adenylate_kinase_AK4"/>
    <property type="match status" value="1"/>
</dbReference>
<dbReference type="InterPro" id="IPR006259">
    <property type="entry name" value="Adenyl_kin_sub"/>
</dbReference>
<dbReference type="InterPro" id="IPR000850">
    <property type="entry name" value="Adenylat/UMP-CMP_kin"/>
</dbReference>
<dbReference type="InterPro" id="IPR033690">
    <property type="entry name" value="Adenylat_kinase_CS"/>
</dbReference>
<dbReference type="InterPro" id="IPR007862">
    <property type="entry name" value="Adenylate_kinase_lid-dom"/>
</dbReference>
<dbReference type="InterPro" id="IPR028586">
    <property type="entry name" value="AK3/Ak4_mitochondrial"/>
</dbReference>
<dbReference type="InterPro" id="IPR028585">
    <property type="entry name" value="AK4_mitochondrial"/>
</dbReference>
<dbReference type="InterPro" id="IPR027417">
    <property type="entry name" value="P-loop_NTPase"/>
</dbReference>
<dbReference type="NCBIfam" id="TIGR01351">
    <property type="entry name" value="adk"/>
    <property type="match status" value="1"/>
</dbReference>
<dbReference type="PANTHER" id="PTHR23359">
    <property type="entry name" value="NUCLEOTIDE KINASE"/>
    <property type="match status" value="1"/>
</dbReference>
<dbReference type="Pfam" id="PF00406">
    <property type="entry name" value="ADK"/>
    <property type="match status" value="1"/>
</dbReference>
<dbReference type="Pfam" id="PF05191">
    <property type="entry name" value="ADK_lid"/>
    <property type="match status" value="1"/>
</dbReference>
<dbReference type="PRINTS" id="PR00094">
    <property type="entry name" value="ADENYLTKNASE"/>
</dbReference>
<dbReference type="SUPFAM" id="SSF52540">
    <property type="entry name" value="P-loop containing nucleoside triphosphate hydrolases"/>
    <property type="match status" value="1"/>
</dbReference>
<dbReference type="PROSITE" id="PS00113">
    <property type="entry name" value="ADENYLATE_KINASE"/>
    <property type="match status" value="1"/>
</dbReference>
<name>KAD4_MOUSE</name>
<evidence type="ECO:0000250" key="1">
    <source>
        <dbReference type="UniProtKB" id="P27144"/>
    </source>
</evidence>
<evidence type="ECO:0000255" key="2">
    <source>
        <dbReference type="HAMAP-Rule" id="MF_03170"/>
    </source>
</evidence>
<evidence type="ECO:0000269" key="3">
    <source>
    </source>
</evidence>
<evidence type="ECO:0000269" key="4">
    <source>
    </source>
</evidence>
<evidence type="ECO:0000269" key="5">
    <source>
    </source>
</evidence>
<evidence type="ECO:0000305" key="6"/>
<evidence type="ECO:0000312" key="7">
    <source>
        <dbReference type="MGI" id="MGI:87979"/>
    </source>
</evidence>
<evidence type="ECO:0007744" key="8">
    <source>
    </source>
</evidence>
<evidence type="ECO:0007744" key="9">
    <source>
    </source>
</evidence>
<keyword id="KW-0007">Acetylation</keyword>
<keyword id="KW-0067">ATP-binding</keyword>
<keyword id="KW-0342">GTP-binding</keyword>
<keyword id="KW-0418">Kinase</keyword>
<keyword id="KW-0496">Mitochondrion</keyword>
<keyword id="KW-0547">Nucleotide-binding</keyword>
<keyword id="KW-1185">Reference proteome</keyword>
<keyword id="KW-0808">Transferase</keyword>
<protein>
    <recommendedName>
        <fullName evidence="1">Adenylate kinase 4, mitochondrial</fullName>
        <ecNumber evidence="1">2.7.4.4</ecNumber>
        <ecNumber evidence="1">2.7.4.6</ecNumber>
    </recommendedName>
    <alternativeName>
        <fullName evidence="2">Adenylate kinase 3-like</fullName>
    </alternativeName>
    <alternativeName>
        <fullName evidence="2">GTP:AMP phosphotransferase AK4</fullName>
    </alternativeName>
</protein>
<comment type="function">
    <text evidence="1">Broad-specificity mitochondrial nucleoside phosphate kinase involved in cellular nucleotide homeostasis by catalyzing nucleoside-phosphate interconversions. Similar to other adenylate kinases, preferentially catalyzes the phosphorylation of the nucleoside monophosphate AMP with ATP as phosphate donor to produce ADP. Phosphorylates only AMP when using GTP as phosphate donor. In vitro, can also catalyze the phosphorylation of CMP, dAMP and dCMP and use GTP as an alternate phosphate donor. Moreover, exhibits a diphosphate kinase activity, producing ATP, CTP, GTP, UTP, TTP, dATP, dCTP and dGTP from the corresponding diphosphate substrates with either ATP or GTP as phosphate donors. Plays a role in controlling cellular ATP levels by regulating phosphorylation and activation of the energy sensor protein kinase AMPK. Plays a protective role in the cellular response to oxidative stress.</text>
</comment>
<comment type="catalytic activity">
    <reaction evidence="1">
        <text>a ribonucleoside 5'-phosphate + ATP = a ribonucleoside 5'-diphosphate + ADP</text>
        <dbReference type="Rhea" id="RHEA:24036"/>
        <dbReference type="ChEBI" id="CHEBI:30616"/>
        <dbReference type="ChEBI" id="CHEBI:57930"/>
        <dbReference type="ChEBI" id="CHEBI:58043"/>
        <dbReference type="ChEBI" id="CHEBI:456216"/>
        <dbReference type="EC" id="2.7.4.4"/>
    </reaction>
</comment>
<comment type="catalytic activity">
    <reaction evidence="1">
        <text>AMP + ATP = 2 ADP</text>
        <dbReference type="Rhea" id="RHEA:12973"/>
        <dbReference type="ChEBI" id="CHEBI:30616"/>
        <dbReference type="ChEBI" id="CHEBI:456215"/>
        <dbReference type="ChEBI" id="CHEBI:456216"/>
    </reaction>
</comment>
<comment type="catalytic activity">
    <reaction evidence="1">
        <text>GTP + AMP = GDP + ADP</text>
        <dbReference type="Rhea" id="RHEA:29863"/>
        <dbReference type="ChEBI" id="CHEBI:37565"/>
        <dbReference type="ChEBI" id="CHEBI:58189"/>
        <dbReference type="ChEBI" id="CHEBI:456215"/>
        <dbReference type="ChEBI" id="CHEBI:456216"/>
    </reaction>
</comment>
<comment type="catalytic activity">
    <reaction evidence="1">
        <text>CMP + ATP = CDP + ADP</text>
        <dbReference type="Rhea" id="RHEA:11600"/>
        <dbReference type="ChEBI" id="CHEBI:30616"/>
        <dbReference type="ChEBI" id="CHEBI:58069"/>
        <dbReference type="ChEBI" id="CHEBI:60377"/>
        <dbReference type="ChEBI" id="CHEBI:456216"/>
    </reaction>
</comment>
<comment type="catalytic activity">
    <reaction evidence="1">
        <text>GTP + CMP = CDP + GDP</text>
        <dbReference type="Rhea" id="RHEA:79855"/>
        <dbReference type="ChEBI" id="CHEBI:37565"/>
        <dbReference type="ChEBI" id="CHEBI:58069"/>
        <dbReference type="ChEBI" id="CHEBI:58189"/>
        <dbReference type="ChEBI" id="CHEBI:60377"/>
    </reaction>
</comment>
<comment type="catalytic activity">
    <reaction evidence="1">
        <text>dAMP + ATP = dADP + ADP</text>
        <dbReference type="Rhea" id="RHEA:23100"/>
        <dbReference type="ChEBI" id="CHEBI:30616"/>
        <dbReference type="ChEBI" id="CHEBI:57667"/>
        <dbReference type="ChEBI" id="CHEBI:58245"/>
        <dbReference type="ChEBI" id="CHEBI:456216"/>
    </reaction>
</comment>
<comment type="catalytic activity">
    <reaction evidence="1">
        <text>dCMP + ATP = dCDP + ADP</text>
        <dbReference type="Rhea" id="RHEA:25094"/>
        <dbReference type="ChEBI" id="CHEBI:30616"/>
        <dbReference type="ChEBI" id="CHEBI:57566"/>
        <dbReference type="ChEBI" id="CHEBI:58593"/>
        <dbReference type="ChEBI" id="CHEBI:456216"/>
    </reaction>
</comment>
<comment type="catalytic activity">
    <reaction evidence="1">
        <text>a 2'-deoxyribonucleoside 5'-diphosphate + ATP = a 2'-deoxyribonucleoside 5'-triphosphate + ADP</text>
        <dbReference type="Rhea" id="RHEA:44640"/>
        <dbReference type="ChEBI" id="CHEBI:30616"/>
        <dbReference type="ChEBI" id="CHEBI:61560"/>
        <dbReference type="ChEBI" id="CHEBI:73316"/>
        <dbReference type="ChEBI" id="CHEBI:456216"/>
        <dbReference type="EC" id="2.7.4.6"/>
    </reaction>
</comment>
<comment type="catalytic activity">
    <reaction evidence="1">
        <text>a ribonucleoside 5'-diphosphate + ATP = a ribonucleoside 5'-triphosphate + ADP</text>
        <dbReference type="Rhea" id="RHEA:18113"/>
        <dbReference type="ChEBI" id="CHEBI:30616"/>
        <dbReference type="ChEBI" id="CHEBI:57930"/>
        <dbReference type="ChEBI" id="CHEBI:61557"/>
        <dbReference type="ChEBI" id="CHEBI:456216"/>
        <dbReference type="EC" id="2.7.4.6"/>
    </reaction>
</comment>
<comment type="catalytic activity">
    <reaction evidence="1">
        <text>GDP + ATP = GTP + ADP</text>
        <dbReference type="Rhea" id="RHEA:27686"/>
        <dbReference type="ChEBI" id="CHEBI:30616"/>
        <dbReference type="ChEBI" id="CHEBI:37565"/>
        <dbReference type="ChEBI" id="CHEBI:58189"/>
        <dbReference type="ChEBI" id="CHEBI:456216"/>
        <dbReference type="EC" id="2.7.4.6"/>
    </reaction>
</comment>
<comment type="catalytic activity">
    <reaction evidence="1">
        <text>CDP + GTP = CTP + GDP</text>
        <dbReference type="Rhea" id="RHEA:79859"/>
        <dbReference type="ChEBI" id="CHEBI:37563"/>
        <dbReference type="ChEBI" id="CHEBI:37565"/>
        <dbReference type="ChEBI" id="CHEBI:58069"/>
        <dbReference type="ChEBI" id="CHEBI:58189"/>
    </reaction>
</comment>
<comment type="catalytic activity">
    <reaction evidence="1">
        <text>CDP + ATP = CTP + ADP</text>
        <dbReference type="Rhea" id="RHEA:25237"/>
        <dbReference type="ChEBI" id="CHEBI:30616"/>
        <dbReference type="ChEBI" id="CHEBI:37563"/>
        <dbReference type="ChEBI" id="CHEBI:58069"/>
        <dbReference type="ChEBI" id="CHEBI:456216"/>
        <dbReference type="EC" id="2.7.4.6"/>
    </reaction>
</comment>
<comment type="catalytic activity">
    <reaction evidence="1">
        <text>UDP + ATP = UTP + ADP</text>
        <dbReference type="Rhea" id="RHEA:25098"/>
        <dbReference type="ChEBI" id="CHEBI:30616"/>
        <dbReference type="ChEBI" id="CHEBI:46398"/>
        <dbReference type="ChEBI" id="CHEBI:58223"/>
        <dbReference type="ChEBI" id="CHEBI:456216"/>
        <dbReference type="EC" id="2.7.4.6"/>
    </reaction>
</comment>
<comment type="catalytic activity">
    <reaction evidence="1">
        <text>GTP + UDP = UTP + GDP</text>
        <dbReference type="Rhea" id="RHEA:79863"/>
        <dbReference type="ChEBI" id="CHEBI:37565"/>
        <dbReference type="ChEBI" id="CHEBI:46398"/>
        <dbReference type="ChEBI" id="CHEBI:58189"/>
        <dbReference type="ChEBI" id="CHEBI:58223"/>
    </reaction>
</comment>
<comment type="catalytic activity">
    <reaction evidence="1">
        <text>dADP + GTP = dATP + GDP</text>
        <dbReference type="Rhea" id="RHEA:79871"/>
        <dbReference type="ChEBI" id="CHEBI:37565"/>
        <dbReference type="ChEBI" id="CHEBI:57667"/>
        <dbReference type="ChEBI" id="CHEBI:58189"/>
        <dbReference type="ChEBI" id="CHEBI:61404"/>
    </reaction>
</comment>
<comment type="catalytic activity">
    <reaction evidence="1">
        <text>dCDP + GTP = dCTP + GDP</text>
        <dbReference type="Rhea" id="RHEA:79875"/>
        <dbReference type="ChEBI" id="CHEBI:37565"/>
        <dbReference type="ChEBI" id="CHEBI:58189"/>
        <dbReference type="ChEBI" id="CHEBI:58593"/>
        <dbReference type="ChEBI" id="CHEBI:61481"/>
    </reaction>
</comment>
<comment type="catalytic activity">
    <reaction evidence="1">
        <text>dCDP + ATP = dCTP + ADP</text>
        <dbReference type="Rhea" id="RHEA:27678"/>
        <dbReference type="ChEBI" id="CHEBI:30616"/>
        <dbReference type="ChEBI" id="CHEBI:58593"/>
        <dbReference type="ChEBI" id="CHEBI:61481"/>
        <dbReference type="ChEBI" id="CHEBI:456216"/>
        <dbReference type="EC" id="2.7.4.6"/>
    </reaction>
</comment>
<comment type="catalytic activity">
    <reaction evidence="1">
        <text>dGDP + ATP = dGTP + ADP</text>
        <dbReference type="Rhea" id="RHEA:27690"/>
        <dbReference type="ChEBI" id="CHEBI:30616"/>
        <dbReference type="ChEBI" id="CHEBI:58595"/>
        <dbReference type="ChEBI" id="CHEBI:61429"/>
        <dbReference type="ChEBI" id="CHEBI:456216"/>
        <dbReference type="EC" id="2.7.4.6"/>
    </reaction>
</comment>
<comment type="catalytic activity">
    <reaction evidence="1">
        <text>dTDP + GTP = dTTP + GDP</text>
        <dbReference type="Rhea" id="RHEA:79867"/>
        <dbReference type="ChEBI" id="CHEBI:37565"/>
        <dbReference type="ChEBI" id="CHEBI:37568"/>
        <dbReference type="ChEBI" id="CHEBI:58189"/>
        <dbReference type="ChEBI" id="CHEBI:58369"/>
    </reaction>
</comment>
<comment type="catalytic activity">
    <reaction evidence="1">
        <text>dTDP + ATP = dTTP + ADP</text>
        <dbReference type="Rhea" id="RHEA:27682"/>
        <dbReference type="ChEBI" id="CHEBI:30616"/>
        <dbReference type="ChEBI" id="CHEBI:37568"/>
        <dbReference type="ChEBI" id="CHEBI:58369"/>
        <dbReference type="ChEBI" id="CHEBI:456216"/>
        <dbReference type="EC" id="2.7.4.6"/>
    </reaction>
</comment>
<comment type="subunit">
    <text evidence="1">Monomer. Interacts with SLC25A5/ANT2.</text>
</comment>
<comment type="subcellular location">
    <subcellularLocation>
        <location evidence="1 2">Mitochondrion matrix</location>
    </subcellularLocation>
</comment>
<comment type="tissue specificity">
    <text evidence="3 4 5">Expressed in kidney, liver, stomach, brain, spinal cord, heart, ovary, oviduct, colon, jejunum, ileum and testis (at protein level) (PubMed:19130895, PubMed:19492028). In the brain, expressed in the pyramidal cells of the cerebrum and glial cells in the cerebellum (at protein level) (PubMed:19492028). In the heart, expressed by myocytes (at protein level) (PubMed:19492028). In the kidney, expressed in the proximal to distal tubule in the cortex and the outer and inner zones of the medulla (at protein level) (PubMed:19492028). In the stomach, expressed in stratified squamous epithelia in the forestomach and in the gastric pit and mucus producing cells of the glandular stomach (at protein level) (PubMed:19492028). Expressed in epithelial cells of the jejunum, ileum, and colon (at protein level) (PubMed:19492028). In the testis, expressed by spermatocytes (at protein level) (PubMed:19492028). In the ovaries, expressed by oocytes, follicular epithelial cells, and corpus luteum cells (at protein level) (PubMed:19492028). In the oviduct, expressed in the epithelia of the isthmus and the ciliated cells of the ampulla (at protein level) (PubMed:19492028). Expressed in the pyramidal cells in the hippocampus (PubMed:9813319).</text>
</comment>
<comment type="developmental stage">
    <text evidence="5">Expressed in the central nervous system in a region-specific manner from the middle stage of embryogenesis to the adulthood in the rodent.</text>
</comment>
<comment type="domain">
    <text evidence="2">Consists of three domains, a large central CORE domain and two small peripheral domains, NMPbind and LID, which undergo movements during catalysis. The LID domain closes over the site of phosphoryl transfer upon GTP/ATP binding. Assembling and dissambling the active center during each catalytic cycle provides an effective means to prevent GTP/ATP hydrolysis.</text>
</comment>
<comment type="similarity">
    <text evidence="2">Belongs to the adenylate kinase family. AK3 subfamily.</text>
</comment>
<sequence length="223" mass="25062">MASKLLRAVILGPPGSGKGTVCERIAQNFGLQHLSSGHLLRENLKTGTEVGDVAKQYLEKGLLVPDHVITRLMMSELETRSAQHWLLDGFPRTLVQAEALDGICDVDLVISLNIPFETLKDRLSRRWIHPSSGRVYNLDFNPPQVQGIDDITGEPLVQQEDDKPEAVAARLRRYKDAAKPVIELYKSRGVLHQFSGTETNRIWPYVYTLFSNKITPIQSKEAY</sequence>